<dbReference type="EMBL" id="CP001164">
    <property type="protein sequence ID" value="ACI39240.1"/>
    <property type="molecule type" value="Genomic_DNA"/>
</dbReference>
<dbReference type="RefSeq" id="WP_001142971.1">
    <property type="nucleotide sequence ID" value="NC_011353.1"/>
</dbReference>
<dbReference type="SMR" id="B5YUX5"/>
<dbReference type="KEGG" id="ecf:ECH74115_1325"/>
<dbReference type="HOGENOM" id="CLU_049215_2_1_6"/>
<dbReference type="GO" id="GO:0005737">
    <property type="term" value="C:cytoplasm"/>
    <property type="evidence" value="ECO:0007669"/>
    <property type="project" value="UniProtKB-SubCell"/>
</dbReference>
<dbReference type="GO" id="GO:0016151">
    <property type="term" value="F:nickel cation binding"/>
    <property type="evidence" value="ECO:0007669"/>
    <property type="project" value="UniProtKB-UniRule"/>
</dbReference>
<dbReference type="Gene3D" id="1.10.4190.10">
    <property type="entry name" value="Urease accessory protein UreF"/>
    <property type="match status" value="1"/>
</dbReference>
<dbReference type="HAMAP" id="MF_01385">
    <property type="entry name" value="UreF"/>
    <property type="match status" value="1"/>
</dbReference>
<dbReference type="InterPro" id="IPR002639">
    <property type="entry name" value="UreF"/>
</dbReference>
<dbReference type="InterPro" id="IPR038277">
    <property type="entry name" value="UreF_sf"/>
</dbReference>
<dbReference type="PANTHER" id="PTHR33620">
    <property type="entry name" value="UREASE ACCESSORY PROTEIN F"/>
    <property type="match status" value="1"/>
</dbReference>
<dbReference type="PANTHER" id="PTHR33620:SF1">
    <property type="entry name" value="UREASE ACCESSORY PROTEIN F"/>
    <property type="match status" value="1"/>
</dbReference>
<dbReference type="Pfam" id="PF01730">
    <property type="entry name" value="UreF"/>
    <property type="match status" value="1"/>
</dbReference>
<dbReference type="PIRSF" id="PIRSF009467">
    <property type="entry name" value="Ureas_acces_UreF"/>
    <property type="match status" value="1"/>
</dbReference>
<feature type="chain" id="PRO_1000145114" description="Urease accessory protein UreF">
    <location>
        <begin position="1"/>
        <end position="224"/>
    </location>
</feature>
<protein>
    <recommendedName>
        <fullName evidence="1">Urease accessory protein UreF</fullName>
    </recommendedName>
</protein>
<comment type="function">
    <text evidence="1">Required for maturation of urease via the functional incorporation of the urease nickel metallocenter.</text>
</comment>
<comment type="subunit">
    <text evidence="1">UreD, UreF and UreG form a complex that acts as a GTP-hydrolysis-dependent molecular chaperone, activating the urease apoprotein by helping to assemble the nickel containing metallocenter of UreC. The UreE protein probably delivers the nickel.</text>
</comment>
<comment type="subcellular location">
    <subcellularLocation>
        <location evidence="1">Cytoplasm</location>
    </subcellularLocation>
</comment>
<comment type="similarity">
    <text evidence="1">Belongs to the UreF family.</text>
</comment>
<organism>
    <name type="scientific">Escherichia coli O157:H7 (strain EC4115 / EHEC)</name>
    <dbReference type="NCBI Taxonomy" id="444450"/>
    <lineage>
        <taxon>Bacteria</taxon>
        <taxon>Pseudomonadati</taxon>
        <taxon>Pseudomonadota</taxon>
        <taxon>Gammaproteobacteria</taxon>
        <taxon>Enterobacterales</taxon>
        <taxon>Enterobacteriaceae</taxon>
        <taxon>Escherichia</taxon>
    </lineage>
</organism>
<accession>B5YUX5</accession>
<gene>
    <name evidence="1" type="primary">ureF</name>
    <name type="ordered locus">ECH74115_1325</name>
</gene>
<keyword id="KW-0143">Chaperone</keyword>
<keyword id="KW-0963">Cytoplasm</keyword>
<keyword id="KW-0996">Nickel insertion</keyword>
<sequence length="224" mass="25156">MPTPEKRLRLMQLASNSLPVGGYSWSQGLEWAVEAGWVEDSAAFEHWQQLQMEQSFFAVDLPLLARLYRACEAGDPDSAGRWTAYLLACRETRELRDEERNRGAAFTRLLVDWQPDCPAEWRKLCQQSQLTGMAWLGVRWQISVSDLALSLGYSWIESAVMAGVRLVPYGQLAAQQLIMRLCARYAANMDSALATPDHAIGSATPLASIASARHETQYSRLFRS</sequence>
<reference key="1">
    <citation type="journal article" date="2011" name="Proc. Natl. Acad. Sci. U.S.A.">
        <title>Genomic anatomy of Escherichia coli O157:H7 outbreaks.</title>
        <authorList>
            <person name="Eppinger M."/>
            <person name="Mammel M.K."/>
            <person name="Leclerc J.E."/>
            <person name="Ravel J."/>
            <person name="Cebula T.A."/>
        </authorList>
    </citation>
    <scope>NUCLEOTIDE SEQUENCE [LARGE SCALE GENOMIC DNA]</scope>
    <source>
        <strain>EC4115 / EHEC</strain>
    </source>
</reference>
<evidence type="ECO:0000255" key="1">
    <source>
        <dbReference type="HAMAP-Rule" id="MF_01385"/>
    </source>
</evidence>
<proteinExistence type="inferred from homology"/>
<name>UREF_ECO5E</name>